<proteinExistence type="evidence at protein level"/>
<keyword id="KW-1185">Reference proteome</keyword>
<organism>
    <name type="scientific">Mycobacterium tuberculosis (strain ATCC 25618 / H37Rv)</name>
    <dbReference type="NCBI Taxonomy" id="83332"/>
    <lineage>
        <taxon>Bacteria</taxon>
        <taxon>Bacillati</taxon>
        <taxon>Actinomycetota</taxon>
        <taxon>Actinomycetes</taxon>
        <taxon>Mycobacteriales</taxon>
        <taxon>Mycobacteriaceae</taxon>
        <taxon>Mycobacterium</taxon>
        <taxon>Mycobacterium tuberculosis complex</taxon>
    </lineage>
</organism>
<gene>
    <name type="ordered locus">Rv1278</name>
    <name type="ORF">MTCY50.04c</name>
</gene>
<feature type="chain" id="PRO_0000103782" description="Uncharacterized protein Rv1278">
    <location>
        <begin position="1"/>
        <end position="875"/>
    </location>
</feature>
<reference key="1">
    <citation type="journal article" date="1998" name="Nature">
        <title>Deciphering the biology of Mycobacterium tuberculosis from the complete genome sequence.</title>
        <authorList>
            <person name="Cole S.T."/>
            <person name="Brosch R."/>
            <person name="Parkhill J."/>
            <person name="Garnier T."/>
            <person name="Churcher C.M."/>
            <person name="Harris D.E."/>
            <person name="Gordon S.V."/>
            <person name="Eiglmeier K."/>
            <person name="Gas S."/>
            <person name="Barry C.E. III"/>
            <person name="Tekaia F."/>
            <person name="Badcock K."/>
            <person name="Basham D."/>
            <person name="Brown D."/>
            <person name="Chillingworth T."/>
            <person name="Connor R."/>
            <person name="Davies R.M."/>
            <person name="Devlin K."/>
            <person name="Feltwell T."/>
            <person name="Gentles S."/>
            <person name="Hamlin N."/>
            <person name="Holroyd S."/>
            <person name="Hornsby T."/>
            <person name="Jagels K."/>
            <person name="Krogh A."/>
            <person name="McLean J."/>
            <person name="Moule S."/>
            <person name="Murphy L.D."/>
            <person name="Oliver S."/>
            <person name="Osborne J."/>
            <person name="Quail M.A."/>
            <person name="Rajandream M.A."/>
            <person name="Rogers J."/>
            <person name="Rutter S."/>
            <person name="Seeger K."/>
            <person name="Skelton S."/>
            <person name="Squares S."/>
            <person name="Squares R."/>
            <person name="Sulston J.E."/>
            <person name="Taylor K."/>
            <person name="Whitehead S."/>
            <person name="Barrell B.G."/>
        </authorList>
    </citation>
    <scope>NUCLEOTIDE SEQUENCE [LARGE SCALE GENOMIC DNA]</scope>
    <source>
        <strain>ATCC 25618 / H37Rv</strain>
    </source>
</reference>
<reference key="2">
    <citation type="journal article" date="2011" name="Mol. Cell. Proteomics">
        <title>Proteogenomic analysis of Mycobacterium tuberculosis by high resolution mass spectrometry.</title>
        <authorList>
            <person name="Kelkar D.S."/>
            <person name="Kumar D."/>
            <person name="Kumar P."/>
            <person name="Balakrishnan L."/>
            <person name="Muthusamy B."/>
            <person name="Yadav A.K."/>
            <person name="Shrivastava P."/>
            <person name="Marimuthu A."/>
            <person name="Anand S."/>
            <person name="Sundaram H."/>
            <person name="Kingsbury R."/>
            <person name="Harsha H.C."/>
            <person name="Nair B."/>
            <person name="Prasad T.S."/>
            <person name="Chauhan D.S."/>
            <person name="Katoch K."/>
            <person name="Katoch V.M."/>
            <person name="Kumar P."/>
            <person name="Chaerkady R."/>
            <person name="Ramachandran S."/>
            <person name="Dash D."/>
            <person name="Pandey A."/>
        </authorList>
    </citation>
    <scope>IDENTIFICATION BY MASS SPECTROMETRY [LARGE SCALE ANALYSIS]</scope>
    <source>
        <strain>ATCC 25618 / H37Rv</strain>
    </source>
</reference>
<sequence length="875" mass="93351">MKLHRLALTNYRGIAHRDVEFPDHGVVVVCGANEIGKSSMVEALDLLLEYKDRSTKKEVKQVKPTNADVGSEVIAEISSGPYRFVYRKRFHKRCETELTVLAPRREQLTGDEAHERVRTMLAETVDTELWHAQRVLQAASTAAVDLSGCDALSRALDLAAGDDAALSGTESLLIERIEAEYARYFTPTGRPTGEWSAAVSRLAAAEAAVADCAAAVAEVDDGVRRHTELTEQVAELSQQLLAHQLRLEAARVAAEKIAAITDDAREAKLIATAAAATSGASTAAHAGRLGLLTEIDTRTAAVVAAEAKARQAADEQATARAEAEACDAALTEATQVLTAVRLRAESARRTLDQLADCEEADRLAARLARIDDIEGDRDRVCAELSAVTLTEELLSRIERAAAAVDRGGAQLASISAAVEFTAAVDIELGVGDQRVSLSAGQSWSVTATGPTEVKVPGVLTARIVPGATALDFQAKYAAAQQELADALAAGEVADLAAARSADLCRRELLSRRDQLTATLAGLCGDEQVDQLRSRLEQLCAGQPAELDLVSTDTATARAELDAVEAARIAAEKDCETRRQIAAGAARRLAETSTRATVLQNAAAAESAELGAAMTRLACERASVGDDELAAKAEADLRVLQTAEQRVIDLADELAATAPDAVAAELAEAADAVELLRERHDEAIRALHEVGVELSVFGTQGRKGKLDAAETEREHAASHHARVGRRARAARLLRSVMARHRDTTRLRYVEPYRAELHRLGRPVFGPSFEVEVDTDLRIRSRTLDDRTVPYECLSGGAKEQLGILARLAGAALVAKEDAVPVLIDDALGFTDPERLAKMGEVFDTIGADGQVIVLTCSPTRYGGVKGAHRIDLDAIQ</sequence>
<dbReference type="EMBL" id="AL123456">
    <property type="protein sequence ID" value="CCP44034.1"/>
    <property type="molecule type" value="Genomic_DNA"/>
</dbReference>
<dbReference type="PIR" id="F70755">
    <property type="entry name" value="F70755"/>
</dbReference>
<dbReference type="RefSeq" id="NP_215794.1">
    <property type="nucleotide sequence ID" value="NC_000962.3"/>
</dbReference>
<dbReference type="RefSeq" id="WP_003898806.1">
    <property type="nucleotide sequence ID" value="NZ_NVQJ01000030.1"/>
</dbReference>
<dbReference type="STRING" id="83332.Rv1278"/>
<dbReference type="PaxDb" id="83332-Rv1278"/>
<dbReference type="GeneID" id="887005"/>
<dbReference type="KEGG" id="mtu:Rv1278"/>
<dbReference type="KEGG" id="mtv:RVBD_1278"/>
<dbReference type="TubercuList" id="Rv1278"/>
<dbReference type="eggNOG" id="COG0419">
    <property type="taxonomic scope" value="Bacteria"/>
</dbReference>
<dbReference type="InParanoid" id="P9WM41"/>
<dbReference type="OrthoDB" id="3177877at2"/>
<dbReference type="Proteomes" id="UP000001584">
    <property type="component" value="Chromosome"/>
</dbReference>
<dbReference type="GO" id="GO:0009274">
    <property type="term" value="C:peptidoglycan-based cell wall"/>
    <property type="evidence" value="ECO:0007005"/>
    <property type="project" value="MTBBASE"/>
</dbReference>
<dbReference type="GO" id="GO:0005886">
    <property type="term" value="C:plasma membrane"/>
    <property type="evidence" value="ECO:0007005"/>
    <property type="project" value="MTBBASE"/>
</dbReference>
<dbReference type="Gene3D" id="3.40.50.300">
    <property type="entry name" value="P-loop containing nucleotide triphosphate hydrolases"/>
    <property type="match status" value="2"/>
</dbReference>
<dbReference type="InterPro" id="IPR041685">
    <property type="entry name" value="AAA_GajA/Old/RecF-like"/>
</dbReference>
<dbReference type="InterPro" id="IPR027417">
    <property type="entry name" value="P-loop_NTPase"/>
</dbReference>
<dbReference type="PANTHER" id="PTHR41259">
    <property type="entry name" value="DOUBLE-STRAND BREAK REPAIR RAD50 ATPASE, PUTATIVE-RELATED"/>
    <property type="match status" value="1"/>
</dbReference>
<dbReference type="PANTHER" id="PTHR41259:SF1">
    <property type="entry name" value="DOUBLE-STRAND BREAK REPAIR RAD50 ATPASE, PUTATIVE-RELATED"/>
    <property type="match status" value="1"/>
</dbReference>
<dbReference type="Pfam" id="PF13175">
    <property type="entry name" value="AAA_15"/>
    <property type="match status" value="1"/>
</dbReference>
<dbReference type="SUPFAM" id="SSF52540">
    <property type="entry name" value="P-loop containing nucleoside triphosphate hydrolases"/>
    <property type="match status" value="1"/>
</dbReference>
<protein>
    <recommendedName>
        <fullName>Uncharacterized protein Rv1278</fullName>
    </recommendedName>
</protein>
<name>Y1278_MYCTU</name>
<accession>P9WM41</accession>
<accession>L0T8X0</accession>
<accession>P64795</accession>
<accession>Q11042</accession>